<organism>
    <name type="scientific">Yersinia enterocolitica serotype O:8 / biotype 1B (strain NCTC 13174 / 8081)</name>
    <dbReference type="NCBI Taxonomy" id="393305"/>
    <lineage>
        <taxon>Bacteria</taxon>
        <taxon>Pseudomonadati</taxon>
        <taxon>Pseudomonadota</taxon>
        <taxon>Gammaproteobacteria</taxon>
        <taxon>Enterobacterales</taxon>
        <taxon>Yersiniaceae</taxon>
        <taxon>Yersinia</taxon>
    </lineage>
</organism>
<gene>
    <name type="ordered locus">YE3444</name>
</gene>
<reference key="1">
    <citation type="journal article" date="2006" name="PLoS Genet.">
        <title>The complete genome sequence and comparative genome analysis of the high pathogenicity Yersinia enterocolitica strain 8081.</title>
        <authorList>
            <person name="Thomson N.R."/>
            <person name="Howard S."/>
            <person name="Wren B.W."/>
            <person name="Holden M.T.G."/>
            <person name="Crossman L."/>
            <person name="Challis G.L."/>
            <person name="Churcher C."/>
            <person name="Mungall K."/>
            <person name="Brooks K."/>
            <person name="Chillingworth T."/>
            <person name="Feltwell T."/>
            <person name="Abdellah Z."/>
            <person name="Hauser H."/>
            <person name="Jagels K."/>
            <person name="Maddison M."/>
            <person name="Moule S."/>
            <person name="Sanders M."/>
            <person name="Whitehead S."/>
            <person name="Quail M.A."/>
            <person name="Dougan G."/>
            <person name="Parkhill J."/>
            <person name="Prentice M.B."/>
        </authorList>
    </citation>
    <scope>NUCLEOTIDE SEQUENCE [LARGE SCALE GENOMIC DNA]</scope>
    <source>
        <strain>NCTC 13174 / 8081</strain>
    </source>
</reference>
<accession>A1JPV6</accession>
<name>FETP_YERE8</name>
<proteinExistence type="inferred from homology"/>
<dbReference type="EMBL" id="AM286415">
    <property type="protein sequence ID" value="CAL13468.1"/>
    <property type="molecule type" value="Genomic_DNA"/>
</dbReference>
<dbReference type="RefSeq" id="WP_011817051.1">
    <property type="nucleotide sequence ID" value="NC_008800.1"/>
</dbReference>
<dbReference type="RefSeq" id="YP_001007610.1">
    <property type="nucleotide sequence ID" value="NC_008800.1"/>
</dbReference>
<dbReference type="SMR" id="A1JPV6"/>
<dbReference type="KEGG" id="yen:YE3444"/>
<dbReference type="PATRIC" id="fig|393305.7.peg.3658"/>
<dbReference type="eggNOG" id="COG2924">
    <property type="taxonomic scope" value="Bacteria"/>
</dbReference>
<dbReference type="HOGENOM" id="CLU_170994_0_0_6"/>
<dbReference type="OrthoDB" id="9804318at2"/>
<dbReference type="Proteomes" id="UP000000642">
    <property type="component" value="Chromosome"/>
</dbReference>
<dbReference type="GO" id="GO:0005829">
    <property type="term" value="C:cytosol"/>
    <property type="evidence" value="ECO:0007669"/>
    <property type="project" value="TreeGrafter"/>
</dbReference>
<dbReference type="GO" id="GO:0005506">
    <property type="term" value="F:iron ion binding"/>
    <property type="evidence" value="ECO:0007669"/>
    <property type="project" value="UniProtKB-UniRule"/>
</dbReference>
<dbReference type="GO" id="GO:0034599">
    <property type="term" value="P:cellular response to oxidative stress"/>
    <property type="evidence" value="ECO:0007669"/>
    <property type="project" value="TreeGrafter"/>
</dbReference>
<dbReference type="FunFam" id="1.10.3880.10:FF:000001">
    <property type="entry name" value="Probable Fe(2+)-trafficking protein"/>
    <property type="match status" value="1"/>
</dbReference>
<dbReference type="Gene3D" id="1.10.3880.10">
    <property type="entry name" value="Fe(II) trafficking protein YggX"/>
    <property type="match status" value="1"/>
</dbReference>
<dbReference type="HAMAP" id="MF_00686">
    <property type="entry name" value="Fe_traffic_YggX"/>
    <property type="match status" value="1"/>
</dbReference>
<dbReference type="InterPro" id="IPR007457">
    <property type="entry name" value="Fe_traffick_prot_YggX"/>
</dbReference>
<dbReference type="InterPro" id="IPR036766">
    <property type="entry name" value="Fe_traffick_prot_YggX_sf"/>
</dbReference>
<dbReference type="NCBIfam" id="NF003817">
    <property type="entry name" value="PRK05408.1"/>
    <property type="match status" value="1"/>
</dbReference>
<dbReference type="PANTHER" id="PTHR36965">
    <property type="entry name" value="FE(2+)-TRAFFICKING PROTEIN-RELATED"/>
    <property type="match status" value="1"/>
</dbReference>
<dbReference type="PANTHER" id="PTHR36965:SF1">
    <property type="entry name" value="FE(2+)-TRAFFICKING PROTEIN-RELATED"/>
    <property type="match status" value="1"/>
</dbReference>
<dbReference type="Pfam" id="PF04362">
    <property type="entry name" value="Iron_traffic"/>
    <property type="match status" value="1"/>
</dbReference>
<dbReference type="PIRSF" id="PIRSF029827">
    <property type="entry name" value="Fe_traffic_YggX"/>
    <property type="match status" value="1"/>
</dbReference>
<dbReference type="SUPFAM" id="SSF111148">
    <property type="entry name" value="YggX-like"/>
    <property type="match status" value="1"/>
</dbReference>
<evidence type="ECO:0000255" key="1">
    <source>
        <dbReference type="HAMAP-Rule" id="MF_00686"/>
    </source>
</evidence>
<protein>
    <recommendedName>
        <fullName evidence="1">Probable Fe(2+)-trafficking protein</fullName>
    </recommendedName>
</protein>
<keyword id="KW-0408">Iron</keyword>
<sequence length="90" mass="10652">MSRTIFCTFLKKEAEGQDFQLYPGEIGKRIYNEISKEAWSQWVTKQTMLINEKKLSMMNVEDRKLLEQEMVNFLFEGQDVHIEGYTPPSQ</sequence>
<feature type="chain" id="PRO_1000045074" description="Probable Fe(2+)-trafficking protein">
    <location>
        <begin position="1"/>
        <end position="90"/>
    </location>
</feature>
<comment type="function">
    <text evidence="1">Could be a mediator in iron transactions between iron acquisition and iron-requiring processes, such as synthesis and/or repair of Fe-S clusters in biosynthetic enzymes.</text>
</comment>
<comment type="subunit">
    <text evidence="1">Monomer.</text>
</comment>
<comment type="similarity">
    <text evidence="1">Belongs to the Fe(2+)-trafficking protein family.</text>
</comment>